<evidence type="ECO:0000250" key="1"/>
<evidence type="ECO:0000250" key="2">
    <source>
        <dbReference type="UniProtKB" id="P29526"/>
    </source>
</evidence>
<evidence type="ECO:0000255" key="3"/>
<evidence type="ECO:0000256" key="4">
    <source>
        <dbReference type="SAM" id="MobiDB-lite"/>
    </source>
</evidence>
<evidence type="ECO:0000269" key="5">
    <source>
    </source>
</evidence>
<evidence type="ECO:0000269" key="6">
    <source>
    </source>
</evidence>
<evidence type="ECO:0000269" key="7">
    <source>
    </source>
</evidence>
<evidence type="ECO:0000303" key="8">
    <source>
    </source>
</evidence>
<evidence type="ECO:0000305" key="9"/>
<evidence type="ECO:0000312" key="10">
    <source>
        <dbReference type="EMBL" id="AAA70401.1"/>
    </source>
</evidence>
<name>OLNB4_BRANA</name>
<accession>Q42627</accession>
<protein>
    <recommendedName>
        <fullName>Oleosin-B4</fullName>
    </recommendedName>
    <component>
        <recommendedName>
            <fullName>Pollen coat protein B4</fullName>
        </recommendedName>
    </component>
</protein>
<reference evidence="9 10" key="1">
    <citation type="journal article" date="1994" name="Plant J.">
        <title>Molecular characterization of two Brassica napus genes related to oleosins which are highly expressed in the tapetum.</title>
        <authorList>
            <person name="Robert L.S."/>
            <person name="Gerster J."/>
            <person name="Allard S."/>
            <person name="Cass L."/>
            <person name="Simmonds J."/>
        </authorList>
    </citation>
    <scope>NUCLEOTIDE SEQUENCE [MRNA]</scope>
    <scope>TISSUE SPECIFICITY</scope>
    <scope>DEVELOPMENTAL STAGE</scope>
    <source>
        <strain evidence="10">cv. Westar</strain>
        <tissue evidence="10">Tapetum</tissue>
    </source>
</reference>
<reference evidence="9" key="2">
    <citation type="journal article" date="1998" name="Plant J.">
        <title>Biosynthesis, targeting and processing of oleosin-like proteins, which are major pollen coat components in Brassica napus.</title>
        <authorList>
            <person name="Murphy D.J."/>
            <person name="Ross J.H.E."/>
        </authorList>
    </citation>
    <scope>PROTEIN SEQUENCE OF 1-10 AND 113-130</scope>
    <scope>FUNCTION</scope>
    <scope>TISSUE SPECIFICITY</scope>
    <scope>DEVELOPMENTAL STAGE</scope>
    <source>
        <strain evidence="7">cv. Topas</strain>
        <tissue evidence="7">Pollen</tissue>
    </source>
</reference>
<reference evidence="9" key="3">
    <citation type="journal article" date="1996" name="Plant J.">
        <title>Characterization of anther-expressed genes encoding a major class of extracellular oleosin-like proteins in the pollen coat of Brassicaceae.</title>
        <authorList>
            <person name="Ross J.H.E."/>
            <person name="Murphy D.J."/>
        </authorList>
    </citation>
    <scope>PROTEIN SEQUENCE OF 113-128</scope>
    <scope>FUNCTION</scope>
    <scope>DEVELOPMENTAL STAGE</scope>
    <source>
        <strain evidence="6">cv. Topas</strain>
        <tissue evidence="6">Pollen</tissue>
    </source>
</reference>
<dbReference type="EMBL" id="L33283">
    <property type="protein sequence ID" value="AAA70401.1"/>
    <property type="molecule type" value="mRNA"/>
</dbReference>
<dbReference type="PIR" id="T08095">
    <property type="entry name" value="T08095"/>
</dbReference>
<dbReference type="RefSeq" id="NP_001302602.1">
    <property type="nucleotide sequence ID" value="NM_001315673.1"/>
</dbReference>
<dbReference type="SMR" id="Q42627"/>
<dbReference type="GeneID" id="106419230"/>
<dbReference type="KEGG" id="bna:106419230"/>
<dbReference type="OrthoDB" id="1114075at2759"/>
<dbReference type="GO" id="GO:0016020">
    <property type="term" value="C:membrane"/>
    <property type="evidence" value="ECO:0007669"/>
    <property type="project" value="UniProtKB-SubCell"/>
</dbReference>
<dbReference type="GO" id="GO:0012511">
    <property type="term" value="C:monolayer-surrounded lipid storage body"/>
    <property type="evidence" value="ECO:0007669"/>
    <property type="project" value="InterPro"/>
</dbReference>
<dbReference type="GO" id="GO:0009791">
    <property type="term" value="P:post-embryonic development"/>
    <property type="evidence" value="ECO:0007669"/>
    <property type="project" value="UniProtKB-ARBA"/>
</dbReference>
<dbReference type="GO" id="GO:0048608">
    <property type="term" value="P:reproductive structure development"/>
    <property type="evidence" value="ECO:0007669"/>
    <property type="project" value="UniProtKB-ARBA"/>
</dbReference>
<dbReference type="InterPro" id="IPR000136">
    <property type="entry name" value="Oleosin"/>
</dbReference>
<dbReference type="PANTHER" id="PTHR33203">
    <property type="entry name" value="OLEOSIN"/>
    <property type="match status" value="1"/>
</dbReference>
<dbReference type="PANTHER" id="PTHR33203:SF57">
    <property type="entry name" value="OLEOSIN"/>
    <property type="match status" value="1"/>
</dbReference>
<dbReference type="Pfam" id="PF01277">
    <property type="entry name" value="Oleosin"/>
    <property type="match status" value="1"/>
</dbReference>
<dbReference type="PROSITE" id="PS00811">
    <property type="entry name" value="OLEOSINS"/>
    <property type="match status" value="1"/>
</dbReference>
<organism>
    <name type="scientific">Brassica napus</name>
    <name type="common">Rape</name>
    <dbReference type="NCBI Taxonomy" id="3708"/>
    <lineage>
        <taxon>Eukaryota</taxon>
        <taxon>Viridiplantae</taxon>
        <taxon>Streptophyta</taxon>
        <taxon>Embryophyta</taxon>
        <taxon>Tracheophyta</taxon>
        <taxon>Spermatophyta</taxon>
        <taxon>Magnoliopsida</taxon>
        <taxon>eudicotyledons</taxon>
        <taxon>Gunneridae</taxon>
        <taxon>Pentapetalae</taxon>
        <taxon>rosids</taxon>
        <taxon>malvids</taxon>
        <taxon>Brassicales</taxon>
        <taxon>Brassicaceae</taxon>
        <taxon>Brassiceae</taxon>
        <taxon>Brassica</taxon>
    </lineage>
</organism>
<gene>
    <name evidence="8" type="primary">OlnB4</name>
    <name evidence="10" type="synonym">STA 41-9</name>
</gene>
<proteinExistence type="evidence at protein level"/>
<feature type="chain" id="PRO_0000284756" description="Oleosin-B4">
    <location>
        <begin position="1"/>
        <end position="377"/>
    </location>
</feature>
<feature type="chain" id="PRO_0000284757" description="Pollen coat protein B4" evidence="6">
    <location>
        <begin position="113"/>
        <end position="377"/>
    </location>
</feature>
<feature type="transmembrane region" description="Helical" evidence="3">
    <location>
        <begin position="16"/>
        <end position="36"/>
    </location>
</feature>
<feature type="transmembrane region" description="Helical" evidence="3">
    <location>
        <begin position="38"/>
        <end position="58"/>
    </location>
</feature>
<feature type="transmembrane region" description="Helical" evidence="3">
    <location>
        <begin position="69"/>
        <end position="89"/>
    </location>
</feature>
<feature type="repeat" description="1-1" evidence="5">
    <location>
        <begin position="115"/>
        <end position="124"/>
    </location>
</feature>
<feature type="repeat" description="1-2" evidence="5">
    <location>
        <begin position="125"/>
        <end position="134"/>
    </location>
</feature>
<feature type="repeat" description="1-3" evidence="5">
    <location>
        <begin position="135"/>
        <end position="144"/>
    </location>
</feature>
<feature type="repeat" description="2-1" evidence="5">
    <location>
        <begin position="196"/>
        <end position="202"/>
    </location>
</feature>
<feature type="repeat" description="2.1" evidence="5">
    <location>
        <begin position="196"/>
        <end position="202"/>
    </location>
</feature>
<feature type="repeat" description="2-2; truncated" evidence="5">
    <location>
        <begin position="204"/>
        <end position="208"/>
    </location>
</feature>
<feature type="repeat" description="2-3" evidence="5">
    <location>
        <begin position="209"/>
        <end position="215"/>
    </location>
</feature>
<feature type="repeat" description="2-4" evidence="5">
    <location>
        <begin position="216"/>
        <end position="222"/>
    </location>
</feature>
<feature type="repeat" description="3-1" evidence="5">
    <location>
        <begin position="230"/>
        <end position="247"/>
    </location>
</feature>
<feature type="repeat" description="3-2" evidence="5">
    <location>
        <begin position="260"/>
        <end position="277"/>
    </location>
</feature>
<feature type="repeat" description="3-3" evidence="5">
    <location>
        <begin position="278"/>
        <end position="295"/>
    </location>
</feature>
<feature type="repeat" description="3-4" evidence="5">
    <location>
        <begin position="296"/>
        <end position="313"/>
    </location>
</feature>
<feature type="repeat" description="4-1" evidence="5">
    <location>
        <begin position="355"/>
        <end position="359"/>
    </location>
</feature>
<feature type="repeat" description="4-2; truncated" evidence="5">
    <location>
        <begin position="360"/>
        <end position="363"/>
    </location>
</feature>
<feature type="repeat" description="4-3" evidence="5">
    <location>
        <begin position="364"/>
        <end position="368"/>
    </location>
</feature>
<feature type="region of interest" description="Polar" evidence="3">
    <location>
        <begin position="1"/>
        <end position="37"/>
    </location>
</feature>
<feature type="region of interest" description="Hydrophobic" evidence="3">
    <location>
        <begin position="38"/>
        <end position="133"/>
    </location>
</feature>
<feature type="region of interest" description="3 X 10 AA tandem repeats of I-P-E-[SG]-I-K-P-S-N-[IV]" evidence="5">
    <location>
        <begin position="115"/>
        <end position="144"/>
    </location>
</feature>
<feature type="region of interest" description="Disordered" evidence="4">
    <location>
        <begin position="158"/>
        <end position="377"/>
    </location>
</feature>
<feature type="region of interest" description="3 X 6 AA tandem repeats of E-[SD]-[KT]-H-G-[KS]-G" evidence="5">
    <location>
        <begin position="196"/>
        <end position="222"/>
    </location>
</feature>
<feature type="region of interest" description="4 X 18 AA tandem repeats of K-H-E-S-G-G-[SA]-[PSA]-M-G-G-G-K-H-G-S-[GE]-G" evidence="5">
    <location>
        <begin position="230"/>
        <end position="313"/>
    </location>
</feature>
<feature type="region of interest" description="3 X 5 AA tandem repeats of S-S-D-G-S" evidence="5">
    <location>
        <begin position="355"/>
        <end position="368"/>
    </location>
</feature>
<feature type="compositionally biased region" description="Basic and acidic residues" evidence="4">
    <location>
        <begin position="162"/>
        <end position="185"/>
    </location>
</feature>
<feature type="compositionally biased region" description="Basic and acidic residues" evidence="4">
    <location>
        <begin position="195"/>
        <end position="231"/>
    </location>
</feature>
<feature type="compositionally biased region" description="Gly residues" evidence="4">
    <location>
        <begin position="232"/>
        <end position="244"/>
    </location>
</feature>
<feature type="compositionally biased region" description="Basic and acidic residues" evidence="4">
    <location>
        <begin position="247"/>
        <end position="263"/>
    </location>
</feature>
<feature type="compositionally biased region" description="Gly residues" evidence="4">
    <location>
        <begin position="280"/>
        <end position="292"/>
    </location>
</feature>
<feature type="compositionally biased region" description="Gly residues" evidence="4">
    <location>
        <begin position="302"/>
        <end position="314"/>
    </location>
</feature>
<feature type="compositionally biased region" description="Low complexity" evidence="4">
    <location>
        <begin position="350"/>
        <end position="369"/>
    </location>
</feature>
<sequence length="377" mass="37647">MRNEIQNETAQTDQTQGSMFSFFNLFPFLLPMFEVIKMVVASVASVVYLGFAGVTLSGSAVALAVSTPLFIIFSPILLPAIAATTVLAAGLGGKKVAAAPEASPAASPSLSLLGIPESIKPSNIIPESIKPSNIIPEGIKPSNIKDKIKDTIGKVKNKIKAKKEEKSKGKSEDSSKGKGKSKGEDTTTDDDTTTDEDKHGSGAKHGKGESKHGKGESTHGKGGKHGSEGKHGSGGSSMGGGKHGSGGKHETGGKHGSGGKHESGGSPMGGGKHGSEGKHGSGGASMGGGKHGSGGKHESGGSAMGGGKHGSGGKHGSEGKHGGEGSSMGKNSLSKKKKEFHYRGQAMDASSTSESSDGSSDGSSSDGSSHGSGGKHI</sequence>
<keyword id="KW-0903">Direct protein sequencing</keyword>
<keyword id="KW-0551">Lipid droplet</keyword>
<keyword id="KW-0472">Membrane</keyword>
<keyword id="KW-0677">Repeat</keyword>
<keyword id="KW-0812">Transmembrane</keyword>
<keyword id="KW-1133">Transmembrane helix</keyword>
<comment type="function">
    <text evidence="6 7">Many of the major pollen coat proteins are derived from endoproteolytic cleavage of oleosin-like proteins.</text>
</comment>
<comment type="subcellular location">
    <subcellularLocation>
        <location evidence="1">Lipid droplet</location>
    </subcellularLocation>
    <subcellularLocation>
        <location evidence="1">Membrane</location>
        <topology evidence="1">Multi-pass membrane protein</topology>
    </subcellularLocation>
    <text evidence="2">Surface of oil bodies. Oleosins exist at a monolayer lipid/water interface (By similarity).</text>
</comment>
<comment type="tissue specificity">
    <text evidence="5 7">The full-length protein is found in the tapetal lipid bodies of immature anthers, the proteolytically cleaved C-terminal product is found on the coats of pollen grains. No expression is detected in other flower organs, siliques or seedlings.</text>
</comment>
<comment type="developmental stage">
    <text evidence="5 6 7">Only expressed in early developing buds and anthers, mRNA is first detected in 2-3 mm buds, expression levels peak in 4-5 mm buds and are absent in later stages of development.</text>
</comment>
<comment type="similarity">
    <text evidence="3">Belongs to the oleosin family.</text>
</comment>